<feature type="chain" id="PRO_0000438049" description="Kinesin-like protein KIN-14P">
    <location>
        <begin position="1"/>
        <end position="1025"/>
    </location>
</feature>
<feature type="domain" description="Kinesin motor" evidence="2">
    <location>
        <begin position="509"/>
        <end position="838"/>
    </location>
</feature>
<feature type="region of interest" description="Disordered" evidence="3">
    <location>
        <begin position="1"/>
        <end position="87"/>
    </location>
</feature>
<feature type="region of interest" description="Disordered" evidence="3">
    <location>
        <begin position="263"/>
        <end position="286"/>
    </location>
</feature>
<feature type="region of interest" description="Disordered" evidence="3">
    <location>
        <begin position="881"/>
        <end position="926"/>
    </location>
</feature>
<feature type="region of interest" description="Disordered" evidence="3">
    <location>
        <begin position="939"/>
        <end position="977"/>
    </location>
</feature>
<feature type="region of interest" description="Disordered" evidence="3">
    <location>
        <begin position="994"/>
        <end position="1025"/>
    </location>
</feature>
<feature type="coiled-coil region" evidence="1">
    <location>
        <begin position="203"/>
        <end position="425"/>
    </location>
</feature>
<feature type="coiled-coil region" evidence="1">
    <location>
        <begin position="847"/>
        <end position="879"/>
    </location>
</feature>
<feature type="compositionally biased region" description="Low complexity" evidence="3">
    <location>
        <begin position="15"/>
        <end position="28"/>
    </location>
</feature>
<feature type="compositionally biased region" description="Basic and acidic residues" evidence="3">
    <location>
        <begin position="29"/>
        <end position="41"/>
    </location>
</feature>
<feature type="compositionally biased region" description="Low complexity" evidence="3">
    <location>
        <begin position="42"/>
        <end position="53"/>
    </location>
</feature>
<feature type="compositionally biased region" description="Polar residues" evidence="3">
    <location>
        <begin position="65"/>
        <end position="75"/>
    </location>
</feature>
<feature type="compositionally biased region" description="Basic and acidic residues" evidence="3">
    <location>
        <begin position="270"/>
        <end position="286"/>
    </location>
</feature>
<feature type="compositionally biased region" description="Polar residues" evidence="3">
    <location>
        <begin position="901"/>
        <end position="913"/>
    </location>
</feature>
<feature type="compositionally biased region" description="Polar residues" evidence="3">
    <location>
        <begin position="939"/>
        <end position="948"/>
    </location>
</feature>
<feature type="compositionally biased region" description="Basic and acidic residues" evidence="3">
    <location>
        <begin position="950"/>
        <end position="962"/>
    </location>
</feature>
<feature type="compositionally biased region" description="Low complexity" evidence="3">
    <location>
        <begin position="963"/>
        <end position="974"/>
    </location>
</feature>
<feature type="compositionally biased region" description="Low complexity" evidence="3">
    <location>
        <begin position="998"/>
        <end position="1016"/>
    </location>
</feature>
<feature type="binding site" evidence="2">
    <location>
        <begin position="593"/>
        <end position="600"/>
    </location>
    <ligand>
        <name>ATP</name>
        <dbReference type="ChEBI" id="CHEBI:30616"/>
    </ligand>
</feature>
<reference key="1">
    <citation type="journal article" date="2000" name="Nature">
        <title>Sequence and analysis of chromosome 1 of the plant Arabidopsis thaliana.</title>
        <authorList>
            <person name="Theologis A."/>
            <person name="Ecker J.R."/>
            <person name="Palm C.J."/>
            <person name="Federspiel N.A."/>
            <person name="Kaul S."/>
            <person name="White O."/>
            <person name="Alonso J."/>
            <person name="Altafi H."/>
            <person name="Araujo R."/>
            <person name="Bowman C.L."/>
            <person name="Brooks S.Y."/>
            <person name="Buehler E."/>
            <person name="Chan A."/>
            <person name="Chao Q."/>
            <person name="Chen H."/>
            <person name="Cheuk R.F."/>
            <person name="Chin C.W."/>
            <person name="Chung M.K."/>
            <person name="Conn L."/>
            <person name="Conway A.B."/>
            <person name="Conway A.R."/>
            <person name="Creasy T.H."/>
            <person name="Dewar K."/>
            <person name="Dunn P."/>
            <person name="Etgu P."/>
            <person name="Feldblyum T.V."/>
            <person name="Feng J.-D."/>
            <person name="Fong B."/>
            <person name="Fujii C.Y."/>
            <person name="Gill J.E."/>
            <person name="Goldsmith A.D."/>
            <person name="Haas B."/>
            <person name="Hansen N.F."/>
            <person name="Hughes B."/>
            <person name="Huizar L."/>
            <person name="Hunter J.L."/>
            <person name="Jenkins J."/>
            <person name="Johnson-Hopson C."/>
            <person name="Khan S."/>
            <person name="Khaykin E."/>
            <person name="Kim C.J."/>
            <person name="Koo H.L."/>
            <person name="Kremenetskaia I."/>
            <person name="Kurtz D.B."/>
            <person name="Kwan A."/>
            <person name="Lam B."/>
            <person name="Langin-Hooper S."/>
            <person name="Lee A."/>
            <person name="Lee J.M."/>
            <person name="Lenz C.A."/>
            <person name="Li J.H."/>
            <person name="Li Y.-P."/>
            <person name="Lin X."/>
            <person name="Liu S.X."/>
            <person name="Liu Z.A."/>
            <person name="Luros J.S."/>
            <person name="Maiti R."/>
            <person name="Marziali A."/>
            <person name="Militscher J."/>
            <person name="Miranda M."/>
            <person name="Nguyen M."/>
            <person name="Nierman W.C."/>
            <person name="Osborne B.I."/>
            <person name="Pai G."/>
            <person name="Peterson J."/>
            <person name="Pham P.K."/>
            <person name="Rizzo M."/>
            <person name="Rooney T."/>
            <person name="Rowley D."/>
            <person name="Sakano H."/>
            <person name="Salzberg S.L."/>
            <person name="Schwartz J.R."/>
            <person name="Shinn P."/>
            <person name="Southwick A.M."/>
            <person name="Sun H."/>
            <person name="Tallon L.J."/>
            <person name="Tambunga G."/>
            <person name="Toriumi M.J."/>
            <person name="Town C.D."/>
            <person name="Utterback T."/>
            <person name="Van Aken S."/>
            <person name="Vaysberg M."/>
            <person name="Vysotskaia V.S."/>
            <person name="Walker M."/>
            <person name="Wu D."/>
            <person name="Yu G."/>
            <person name="Fraser C.M."/>
            <person name="Venter J.C."/>
            <person name="Davis R.W."/>
        </authorList>
    </citation>
    <scope>NUCLEOTIDE SEQUENCE [LARGE SCALE GENOMIC DNA]</scope>
    <source>
        <strain>cv. Columbia</strain>
    </source>
</reference>
<reference key="2">
    <citation type="journal article" date="2017" name="Plant J.">
        <title>Araport11: a complete reannotation of the Arabidopsis thaliana reference genome.</title>
        <authorList>
            <person name="Cheng C.Y."/>
            <person name="Krishnakumar V."/>
            <person name="Chan A.P."/>
            <person name="Thibaud-Nissen F."/>
            <person name="Schobel S."/>
            <person name="Town C.D."/>
        </authorList>
    </citation>
    <scope>GENOME REANNOTATION</scope>
    <source>
        <strain>cv. Columbia</strain>
    </source>
</reference>
<reference key="3">
    <citation type="submission" date="2006-07" db="EMBL/GenBank/DDBJ databases">
        <title>Large-scale analysis of RIKEN Arabidopsis full-length (RAFL) cDNAs.</title>
        <authorList>
            <person name="Totoki Y."/>
            <person name="Seki M."/>
            <person name="Ishida J."/>
            <person name="Nakajima M."/>
            <person name="Enju A."/>
            <person name="Kamiya A."/>
            <person name="Narusaka M."/>
            <person name="Shin-i T."/>
            <person name="Nakagawa M."/>
            <person name="Sakamoto N."/>
            <person name="Oishi K."/>
            <person name="Kohara Y."/>
            <person name="Kobayashi M."/>
            <person name="Toyoda A."/>
            <person name="Sakaki Y."/>
            <person name="Sakurai T."/>
            <person name="Iida K."/>
            <person name="Akiyama K."/>
            <person name="Satou M."/>
            <person name="Toyoda T."/>
            <person name="Konagaya A."/>
            <person name="Carninci P."/>
            <person name="Kawai J."/>
            <person name="Hayashizaki Y."/>
            <person name="Shinozaki K."/>
        </authorList>
    </citation>
    <scope>NUCLEOTIDE SEQUENCE [LARGE SCALE MRNA]</scope>
    <source>
        <strain>cv. Columbia</strain>
    </source>
</reference>
<reference key="4">
    <citation type="journal article" date="2001" name="BMC Genomics">
        <title>Kinesins in the Arabidopsis genome: a comparative analysis among eukaryotes.</title>
        <authorList>
            <person name="Reddy A.S."/>
            <person name="Day I.S."/>
        </authorList>
    </citation>
    <scope>GENE FAMILY</scope>
</reference>
<reference key="5">
    <citation type="journal article" date="2006" name="BMC Genomics">
        <title>Comprehensive comparative analysis of kinesins in photosynthetic eukaryotes.</title>
        <authorList>
            <person name="Richardson D.N."/>
            <person name="Simmons M.P."/>
            <person name="Reddy A.S."/>
        </authorList>
    </citation>
    <scope>GENE FAMILY</scope>
    <scope>NOMENCLATURE</scope>
</reference>
<reference key="6">
    <citation type="journal article" date="2012" name="Protoplasma">
        <title>Functions of the Arabidopsis kinesin superfamily of microtubule-based motor proteins.</title>
        <authorList>
            <person name="Zhu C."/>
            <person name="Dixit R."/>
        </authorList>
    </citation>
    <scope>REVIEW</scope>
</reference>
<sequence length="1025" mass="115129">MNPMRDQPGSPYGDSTPRSPFSPFSPLSVDDRHRNHADTKTPRSPFSPFSPLSGDERHKSLAESKFQQALASSGQLDPLSPGSMHHGGHKFHEVFQMKQGRYDLQASKISEMMKSSSLDNAPTQSLLSVLNGILDESIERKNGEIPQRVACLLRKVVQEIERRISTQAEHLRTQNNIFKTREEKYQSRINVLEALASGTGVEHEIATQQLRQIETEKSMWEEKKKHEEEDMVKLMKQNDQHNLEISALKQELETTKRKYEQQYSQIESQTKTEKSKWEEQKKNEEEDMDKLLKENDQFNLQISALRQELETTRKAYEQQCSQMESQTMVATTGLESRLKELEQEGKVVNTAKNALEERVKELEQMGKEAHSAKNALEEKIKQLQQMEKETKTANTSLEGKIQELEQNLVMWKTKVREMEKKSESNHQRWSQKELSYKSFIDNQSQALLELRSYSRSIKQEILKVQENYTDQFSQLGKKLIELSNAAENYHAVLTENRKLFNELQELKGNIRVFCRVRPFLPAQGAANTVVEYVGEDGELVVTNPTRPGKDGLRQFKFNKVYSPTASQADVFSDIRPLVRSVLDGYNVCIFAYGQTGSGKTYTMTGPDGSSEEDWGVNYRALNDLFKISQSRKGNISYEVGVQMVEIYNEQVLDLLSDDNSQKKTLGILSTTQQNGLAVPDASMYPVTSTSDVITLMDIGLQNRAVGSTALNERSSRSHSIVTVHVRGKDLKTGSVLYGNLHLVDLAGSERVDRSEVTGDRLREAQHINKSLSSLGDVIFSLASKSSHVPYRNSKLTQLLQTSLGGRAKTLMFVQLNPDATSYSESMSTLKFAERVSGVELGAAKTSKEGKDVRDLMEQLASLKDTIARKDEEIERLQHQPQRLQKSMMRRKSIGHTDDINSDTGEYSSQSRYSVTDGESLASSAEAEYDERLSEITSDAASMGTQGSIDVTKRPPRISDRAKSVTAKSSTSVTRPLDKLRKVATRTTSTVAKVTGLTSSSKGLASSSIKKTGSTSSLAKSSKRWA</sequence>
<dbReference type="EMBL" id="AC012679">
    <property type="protein sequence ID" value="AAG52083.1"/>
    <property type="status" value="ALT_SEQ"/>
    <property type="molecule type" value="Genomic_DNA"/>
</dbReference>
<dbReference type="EMBL" id="AC016662">
    <property type="protein sequence ID" value="AAG52533.1"/>
    <property type="status" value="ALT_SEQ"/>
    <property type="molecule type" value="Genomic_DNA"/>
</dbReference>
<dbReference type="EMBL" id="CP002684">
    <property type="protein sequence ID" value="AEE35517.1"/>
    <property type="molecule type" value="Genomic_DNA"/>
</dbReference>
<dbReference type="EMBL" id="AK229581">
    <property type="protein sequence ID" value="BAF01431.1"/>
    <property type="molecule type" value="mRNA"/>
</dbReference>
<dbReference type="PIR" id="B96766">
    <property type="entry name" value="B96766"/>
</dbReference>
<dbReference type="RefSeq" id="NP_177527.3">
    <property type="nucleotide sequence ID" value="NM_106046.5"/>
</dbReference>
<dbReference type="SMR" id="Q0WN69"/>
<dbReference type="FunCoup" id="Q0WN69">
    <property type="interactions" value="27"/>
</dbReference>
<dbReference type="STRING" id="3702.Q0WN69"/>
<dbReference type="iPTMnet" id="Q0WN69"/>
<dbReference type="PaxDb" id="3702-AT1G73860.1"/>
<dbReference type="ProteomicsDB" id="237064"/>
<dbReference type="EnsemblPlants" id="AT1G73860.1">
    <property type="protein sequence ID" value="AT1G73860.1"/>
    <property type="gene ID" value="AT1G73860"/>
</dbReference>
<dbReference type="GeneID" id="843722"/>
<dbReference type="Gramene" id="AT1G73860.1">
    <property type="protein sequence ID" value="AT1G73860.1"/>
    <property type="gene ID" value="AT1G73860"/>
</dbReference>
<dbReference type="KEGG" id="ath:AT1G73860"/>
<dbReference type="Araport" id="AT1G73860"/>
<dbReference type="TAIR" id="AT1G73860"/>
<dbReference type="eggNOG" id="KOG0239">
    <property type="taxonomic scope" value="Eukaryota"/>
</dbReference>
<dbReference type="HOGENOM" id="CLU_001485_1_2_1"/>
<dbReference type="InParanoid" id="Q0WN69"/>
<dbReference type="PhylomeDB" id="Q0WN69"/>
<dbReference type="PRO" id="PR:Q0WN69"/>
<dbReference type="Proteomes" id="UP000006548">
    <property type="component" value="Chromosome 1"/>
</dbReference>
<dbReference type="ExpressionAtlas" id="Q0WN69">
    <property type="expression patterns" value="baseline and differential"/>
</dbReference>
<dbReference type="GO" id="GO:0009507">
    <property type="term" value="C:chloroplast"/>
    <property type="evidence" value="ECO:0007005"/>
    <property type="project" value="TAIR"/>
</dbReference>
<dbReference type="GO" id="GO:0005874">
    <property type="term" value="C:microtubule"/>
    <property type="evidence" value="ECO:0007669"/>
    <property type="project" value="UniProtKB-KW"/>
</dbReference>
<dbReference type="GO" id="GO:0005524">
    <property type="term" value="F:ATP binding"/>
    <property type="evidence" value="ECO:0007669"/>
    <property type="project" value="UniProtKB-KW"/>
</dbReference>
<dbReference type="GO" id="GO:0008017">
    <property type="term" value="F:microtubule binding"/>
    <property type="evidence" value="ECO:0007669"/>
    <property type="project" value="InterPro"/>
</dbReference>
<dbReference type="GO" id="GO:0003777">
    <property type="term" value="F:microtubule motor activity"/>
    <property type="evidence" value="ECO:0007669"/>
    <property type="project" value="InterPro"/>
</dbReference>
<dbReference type="GO" id="GO:0007018">
    <property type="term" value="P:microtubule-based movement"/>
    <property type="evidence" value="ECO:0007669"/>
    <property type="project" value="InterPro"/>
</dbReference>
<dbReference type="FunFam" id="3.40.850.10:FF:000044">
    <property type="entry name" value="p-loop containing nucleoside triphosphate hydrolases superfamily protein"/>
    <property type="match status" value="1"/>
</dbReference>
<dbReference type="Gene3D" id="1.20.5.170">
    <property type="match status" value="2"/>
</dbReference>
<dbReference type="Gene3D" id="3.40.850.10">
    <property type="entry name" value="Kinesin motor domain"/>
    <property type="match status" value="1"/>
</dbReference>
<dbReference type="InterPro" id="IPR027640">
    <property type="entry name" value="Kinesin-like_fam"/>
</dbReference>
<dbReference type="InterPro" id="IPR001752">
    <property type="entry name" value="Kinesin_motor_dom"/>
</dbReference>
<dbReference type="InterPro" id="IPR036961">
    <property type="entry name" value="Kinesin_motor_dom_sf"/>
</dbReference>
<dbReference type="InterPro" id="IPR027417">
    <property type="entry name" value="P-loop_NTPase"/>
</dbReference>
<dbReference type="PANTHER" id="PTHR47972:SF50">
    <property type="entry name" value="KINESIN-LIKE PROTEIN KIN-14P"/>
    <property type="match status" value="1"/>
</dbReference>
<dbReference type="PANTHER" id="PTHR47972">
    <property type="entry name" value="KINESIN-LIKE PROTEIN KLP-3"/>
    <property type="match status" value="1"/>
</dbReference>
<dbReference type="Pfam" id="PF00225">
    <property type="entry name" value="Kinesin"/>
    <property type="match status" value="1"/>
</dbReference>
<dbReference type="PRINTS" id="PR00380">
    <property type="entry name" value="KINESINHEAVY"/>
</dbReference>
<dbReference type="SMART" id="SM00129">
    <property type="entry name" value="KISc"/>
    <property type="match status" value="1"/>
</dbReference>
<dbReference type="SUPFAM" id="SSF52540">
    <property type="entry name" value="P-loop containing nucleoside triphosphate hydrolases"/>
    <property type="match status" value="1"/>
</dbReference>
<dbReference type="PROSITE" id="PS50067">
    <property type="entry name" value="KINESIN_MOTOR_2"/>
    <property type="match status" value="1"/>
</dbReference>
<gene>
    <name evidence="5" type="primary">KIN14P</name>
    <name evidence="6" type="ordered locus">At1g73860</name>
    <name evidence="7" type="ORF">F25P22.28</name>
    <name evidence="8" type="ORF">F2P9.27</name>
</gene>
<comment type="similarity">
    <text evidence="4">Belongs to the TRAFAC class myosin-kinesin ATPase superfamily. Kinesin family. KIN-14 subfamily.</text>
</comment>
<comment type="sequence caution" evidence="5">
    <conflict type="erroneous gene model prediction">
        <sequence resource="EMBL-CDS" id="AAG52083"/>
    </conflict>
</comment>
<comment type="sequence caution" evidence="5">
    <conflict type="erroneous gene model prediction">
        <sequence resource="EMBL-CDS" id="AAG52533"/>
    </conflict>
</comment>
<evidence type="ECO:0000255" key="1"/>
<evidence type="ECO:0000255" key="2">
    <source>
        <dbReference type="PROSITE-ProRule" id="PRU00283"/>
    </source>
</evidence>
<evidence type="ECO:0000256" key="3">
    <source>
        <dbReference type="SAM" id="MobiDB-lite"/>
    </source>
</evidence>
<evidence type="ECO:0000303" key="4">
    <source>
    </source>
</evidence>
<evidence type="ECO:0000305" key="5"/>
<evidence type="ECO:0000312" key="6">
    <source>
        <dbReference type="Araport" id="AT1G73860"/>
    </source>
</evidence>
<evidence type="ECO:0000312" key="7">
    <source>
        <dbReference type="EMBL" id="AAG52083.1"/>
    </source>
</evidence>
<evidence type="ECO:0000312" key="8">
    <source>
        <dbReference type="EMBL" id="AAG52533.1"/>
    </source>
</evidence>
<proteinExistence type="evidence at transcript level"/>
<name>KN14P_ARATH</name>
<protein>
    <recommendedName>
        <fullName evidence="5">Kinesin-like protein KIN-14P</fullName>
    </recommendedName>
</protein>
<keyword id="KW-0067">ATP-binding</keyword>
<keyword id="KW-0175">Coiled coil</keyword>
<keyword id="KW-0493">Microtubule</keyword>
<keyword id="KW-0505">Motor protein</keyword>
<keyword id="KW-0547">Nucleotide-binding</keyword>
<keyword id="KW-1185">Reference proteome</keyword>
<accession>Q0WN69</accession>
<accession>Q9C9A8</accession>
<accession>Q9C9S6</accession>
<organism>
    <name type="scientific">Arabidopsis thaliana</name>
    <name type="common">Mouse-ear cress</name>
    <dbReference type="NCBI Taxonomy" id="3702"/>
    <lineage>
        <taxon>Eukaryota</taxon>
        <taxon>Viridiplantae</taxon>
        <taxon>Streptophyta</taxon>
        <taxon>Embryophyta</taxon>
        <taxon>Tracheophyta</taxon>
        <taxon>Spermatophyta</taxon>
        <taxon>Magnoliopsida</taxon>
        <taxon>eudicotyledons</taxon>
        <taxon>Gunneridae</taxon>
        <taxon>Pentapetalae</taxon>
        <taxon>rosids</taxon>
        <taxon>malvids</taxon>
        <taxon>Brassicales</taxon>
        <taxon>Brassicaceae</taxon>
        <taxon>Camelineae</taxon>
        <taxon>Arabidopsis</taxon>
    </lineage>
</organism>